<protein>
    <recommendedName>
        <fullName evidence="1">Chaperonin GroEL 1</fullName>
        <ecNumber evidence="1">5.6.1.7</ecNumber>
    </recommendedName>
    <alternativeName>
        <fullName evidence="1">60 kDa chaperonin 1</fullName>
    </alternativeName>
    <alternativeName>
        <fullName evidence="1">Chaperonin-60 1</fullName>
        <shortName evidence="1">Cpn60 1</shortName>
    </alternativeName>
</protein>
<name>CH601_ALBFT</name>
<accession>Q21ZD1</accession>
<gene>
    <name evidence="1" type="primary">groEL1</name>
    <name evidence="1" type="synonym">groL1</name>
    <name type="ordered locus">Rfer_1131</name>
</gene>
<dbReference type="EC" id="5.6.1.7" evidence="1"/>
<dbReference type="EMBL" id="CP000267">
    <property type="protein sequence ID" value="ABD68872.1"/>
    <property type="molecule type" value="Genomic_DNA"/>
</dbReference>
<dbReference type="RefSeq" id="WP_011463441.1">
    <property type="nucleotide sequence ID" value="NC_007908.1"/>
</dbReference>
<dbReference type="SMR" id="Q21ZD1"/>
<dbReference type="STRING" id="338969.Rfer_1131"/>
<dbReference type="KEGG" id="rfr:Rfer_1131"/>
<dbReference type="eggNOG" id="COG0459">
    <property type="taxonomic scope" value="Bacteria"/>
</dbReference>
<dbReference type="HOGENOM" id="CLU_016503_3_0_4"/>
<dbReference type="OrthoDB" id="9766614at2"/>
<dbReference type="Proteomes" id="UP000008332">
    <property type="component" value="Chromosome"/>
</dbReference>
<dbReference type="GO" id="GO:0005737">
    <property type="term" value="C:cytoplasm"/>
    <property type="evidence" value="ECO:0007669"/>
    <property type="project" value="UniProtKB-SubCell"/>
</dbReference>
<dbReference type="GO" id="GO:0005524">
    <property type="term" value="F:ATP binding"/>
    <property type="evidence" value="ECO:0007669"/>
    <property type="project" value="UniProtKB-UniRule"/>
</dbReference>
<dbReference type="GO" id="GO:0140662">
    <property type="term" value="F:ATP-dependent protein folding chaperone"/>
    <property type="evidence" value="ECO:0007669"/>
    <property type="project" value="InterPro"/>
</dbReference>
<dbReference type="GO" id="GO:0016853">
    <property type="term" value="F:isomerase activity"/>
    <property type="evidence" value="ECO:0007669"/>
    <property type="project" value="UniProtKB-KW"/>
</dbReference>
<dbReference type="GO" id="GO:0051082">
    <property type="term" value="F:unfolded protein binding"/>
    <property type="evidence" value="ECO:0007669"/>
    <property type="project" value="UniProtKB-UniRule"/>
</dbReference>
<dbReference type="GO" id="GO:0042026">
    <property type="term" value="P:protein refolding"/>
    <property type="evidence" value="ECO:0007669"/>
    <property type="project" value="UniProtKB-UniRule"/>
</dbReference>
<dbReference type="CDD" id="cd03344">
    <property type="entry name" value="GroEL"/>
    <property type="match status" value="1"/>
</dbReference>
<dbReference type="FunFam" id="1.10.560.10:FF:000001">
    <property type="entry name" value="60 kDa chaperonin"/>
    <property type="match status" value="1"/>
</dbReference>
<dbReference type="FunFam" id="3.50.7.10:FF:000001">
    <property type="entry name" value="60 kDa chaperonin"/>
    <property type="match status" value="1"/>
</dbReference>
<dbReference type="Gene3D" id="3.50.7.10">
    <property type="entry name" value="GroEL"/>
    <property type="match status" value="1"/>
</dbReference>
<dbReference type="Gene3D" id="1.10.560.10">
    <property type="entry name" value="GroEL-like equatorial domain"/>
    <property type="match status" value="1"/>
</dbReference>
<dbReference type="Gene3D" id="3.30.260.10">
    <property type="entry name" value="TCP-1-like chaperonin intermediate domain"/>
    <property type="match status" value="1"/>
</dbReference>
<dbReference type="HAMAP" id="MF_00600">
    <property type="entry name" value="CH60"/>
    <property type="match status" value="1"/>
</dbReference>
<dbReference type="InterPro" id="IPR018370">
    <property type="entry name" value="Chaperonin_Cpn60_CS"/>
</dbReference>
<dbReference type="InterPro" id="IPR001844">
    <property type="entry name" value="Cpn60/GroEL"/>
</dbReference>
<dbReference type="InterPro" id="IPR002423">
    <property type="entry name" value="Cpn60/GroEL/TCP-1"/>
</dbReference>
<dbReference type="InterPro" id="IPR027409">
    <property type="entry name" value="GroEL-like_apical_dom_sf"/>
</dbReference>
<dbReference type="InterPro" id="IPR027413">
    <property type="entry name" value="GROEL-like_equatorial_sf"/>
</dbReference>
<dbReference type="InterPro" id="IPR027410">
    <property type="entry name" value="TCP-1-like_intermed_sf"/>
</dbReference>
<dbReference type="NCBIfam" id="TIGR02348">
    <property type="entry name" value="GroEL"/>
    <property type="match status" value="1"/>
</dbReference>
<dbReference type="NCBIfam" id="NF000592">
    <property type="entry name" value="PRK00013.1"/>
    <property type="match status" value="1"/>
</dbReference>
<dbReference type="NCBIfam" id="NF009487">
    <property type="entry name" value="PRK12849.1"/>
    <property type="match status" value="1"/>
</dbReference>
<dbReference type="NCBIfam" id="NF009488">
    <property type="entry name" value="PRK12850.1"/>
    <property type="match status" value="1"/>
</dbReference>
<dbReference type="NCBIfam" id="NF009489">
    <property type="entry name" value="PRK12851.1"/>
    <property type="match status" value="1"/>
</dbReference>
<dbReference type="PANTHER" id="PTHR45633">
    <property type="entry name" value="60 KDA HEAT SHOCK PROTEIN, MITOCHONDRIAL"/>
    <property type="match status" value="1"/>
</dbReference>
<dbReference type="Pfam" id="PF00118">
    <property type="entry name" value="Cpn60_TCP1"/>
    <property type="match status" value="1"/>
</dbReference>
<dbReference type="PRINTS" id="PR00298">
    <property type="entry name" value="CHAPERONIN60"/>
</dbReference>
<dbReference type="SUPFAM" id="SSF52029">
    <property type="entry name" value="GroEL apical domain-like"/>
    <property type="match status" value="1"/>
</dbReference>
<dbReference type="SUPFAM" id="SSF48592">
    <property type="entry name" value="GroEL equatorial domain-like"/>
    <property type="match status" value="1"/>
</dbReference>
<dbReference type="SUPFAM" id="SSF54849">
    <property type="entry name" value="GroEL-intermediate domain like"/>
    <property type="match status" value="1"/>
</dbReference>
<dbReference type="PROSITE" id="PS00296">
    <property type="entry name" value="CHAPERONINS_CPN60"/>
    <property type="match status" value="1"/>
</dbReference>
<evidence type="ECO:0000255" key="1">
    <source>
        <dbReference type="HAMAP-Rule" id="MF_00600"/>
    </source>
</evidence>
<feature type="chain" id="PRO_0000256968" description="Chaperonin GroEL 1">
    <location>
        <begin position="1"/>
        <end position="552"/>
    </location>
</feature>
<feature type="binding site" evidence="1">
    <location>
        <begin position="30"/>
        <end position="33"/>
    </location>
    <ligand>
        <name>ATP</name>
        <dbReference type="ChEBI" id="CHEBI:30616"/>
    </ligand>
</feature>
<feature type="binding site" evidence="1">
    <location>
        <position position="51"/>
    </location>
    <ligand>
        <name>ATP</name>
        <dbReference type="ChEBI" id="CHEBI:30616"/>
    </ligand>
</feature>
<feature type="binding site" evidence="1">
    <location>
        <begin position="87"/>
        <end position="91"/>
    </location>
    <ligand>
        <name>ATP</name>
        <dbReference type="ChEBI" id="CHEBI:30616"/>
    </ligand>
</feature>
<feature type="binding site" evidence="1">
    <location>
        <position position="415"/>
    </location>
    <ligand>
        <name>ATP</name>
        <dbReference type="ChEBI" id="CHEBI:30616"/>
    </ligand>
</feature>
<feature type="binding site" evidence="1">
    <location>
        <begin position="479"/>
        <end position="481"/>
    </location>
    <ligand>
        <name>ATP</name>
        <dbReference type="ChEBI" id="CHEBI:30616"/>
    </ligand>
</feature>
<feature type="binding site" evidence="1">
    <location>
        <position position="495"/>
    </location>
    <ligand>
        <name>ATP</name>
        <dbReference type="ChEBI" id="CHEBI:30616"/>
    </ligand>
</feature>
<proteinExistence type="inferred from homology"/>
<organism>
    <name type="scientific">Albidiferax ferrireducens (strain ATCC BAA-621 / DSM 15236 / T118)</name>
    <name type="common">Rhodoferax ferrireducens</name>
    <dbReference type="NCBI Taxonomy" id="338969"/>
    <lineage>
        <taxon>Bacteria</taxon>
        <taxon>Pseudomonadati</taxon>
        <taxon>Pseudomonadota</taxon>
        <taxon>Betaproteobacteria</taxon>
        <taxon>Burkholderiales</taxon>
        <taxon>Comamonadaceae</taxon>
        <taxon>Rhodoferax</taxon>
    </lineage>
</organism>
<comment type="function">
    <text evidence="1">Together with its co-chaperonin GroES, plays an essential role in assisting protein folding. The GroEL-GroES system forms a nano-cage that allows encapsulation of the non-native substrate proteins and provides a physical environment optimized to promote and accelerate protein folding.</text>
</comment>
<comment type="catalytic activity">
    <reaction evidence="1">
        <text>ATP + H2O + a folded polypeptide = ADP + phosphate + an unfolded polypeptide.</text>
        <dbReference type="EC" id="5.6.1.7"/>
    </reaction>
</comment>
<comment type="subunit">
    <text evidence="1">Forms a cylinder of 14 subunits composed of two heptameric rings stacked back-to-back. Interacts with the co-chaperonin GroES.</text>
</comment>
<comment type="subcellular location">
    <subcellularLocation>
        <location evidence="1">Cytoplasm</location>
    </subcellularLocation>
</comment>
<comment type="similarity">
    <text evidence="1">Belongs to the chaperonin (HSP60) family.</text>
</comment>
<reference key="1">
    <citation type="submission" date="2006-02" db="EMBL/GenBank/DDBJ databases">
        <title>Complete sequence of chromosome of Rhodoferax ferrireducens DSM 15236.</title>
        <authorList>
            <person name="Copeland A."/>
            <person name="Lucas S."/>
            <person name="Lapidus A."/>
            <person name="Barry K."/>
            <person name="Detter J.C."/>
            <person name="Glavina del Rio T."/>
            <person name="Hammon N."/>
            <person name="Israni S."/>
            <person name="Pitluck S."/>
            <person name="Brettin T."/>
            <person name="Bruce D."/>
            <person name="Han C."/>
            <person name="Tapia R."/>
            <person name="Gilna P."/>
            <person name="Kiss H."/>
            <person name="Schmutz J."/>
            <person name="Larimer F."/>
            <person name="Land M."/>
            <person name="Kyrpides N."/>
            <person name="Ivanova N."/>
            <person name="Richardson P."/>
        </authorList>
    </citation>
    <scope>NUCLEOTIDE SEQUENCE [LARGE SCALE GENOMIC DNA]</scope>
    <source>
        <strain>ATCC BAA-621 / DSM 15236 / T118</strain>
    </source>
</reference>
<sequence length="552" mass="57628">MAAKDVIFGGEARARMVEGVNILANAVKVTLGPKGRNVVLDRSFGAPTVTKDGVSVAKEIELKDKLQNMGAQMVKEVASKTSDIAGDGTTTATVLAQAIVHEGMKYVTAGMNPMDLKRGIDKAVHALIVELKKASKATTTSKEIAQVGSISANSDEAIGKIIADAMDKVGKEGVITVEDGKSLDSELDVVEGMQFDRGYLSPYFINNPEKQAALLDNPFVLLYDKKISNIRDLLPTLEQVAKSGRPLLIISEDVEGEALATLVVNTIRGILKVVAVKAPGFGDRRKAMLEDIAILTGGKVIAEEVGMSLEKVTLADLGSAKRIEVGKENTIIIDGAGAAADIEARVKQVRVQIEEATSDYDREKLQERVAKLAGGVAVIKVGAATEVEMKEKKARVEDALHATRAAVEEGIVAGGGVALLRAKQAVGTLKGANADQDAGIKLVMKAIEAPLREIVYNAGGEASVVVNAVMAGKGNYGFNAANDTYGDMIEMGILDPTKVTRTALQNAASVASLMLTTECMVSESPKDDSAAGMGGMGGGDMGGMGGMGGMGM</sequence>
<keyword id="KW-0067">ATP-binding</keyword>
<keyword id="KW-0143">Chaperone</keyword>
<keyword id="KW-0963">Cytoplasm</keyword>
<keyword id="KW-0413">Isomerase</keyword>
<keyword id="KW-0547">Nucleotide-binding</keyword>
<keyword id="KW-1185">Reference proteome</keyword>